<feature type="chain" id="PRO_0000230176" description="Phosphoribosyl-ATP pyrophosphatase">
    <location>
        <begin position="1"/>
        <end position="133"/>
    </location>
</feature>
<feature type="region of interest" description="Disordered" evidence="2">
    <location>
        <begin position="1"/>
        <end position="22"/>
    </location>
</feature>
<dbReference type="EC" id="3.6.1.31" evidence="1"/>
<dbReference type="EMBL" id="CP000009">
    <property type="protein sequence ID" value="AAW60264.1"/>
    <property type="molecule type" value="Genomic_DNA"/>
</dbReference>
<dbReference type="RefSeq" id="WP_011252065.1">
    <property type="nucleotide sequence ID" value="NZ_LT900338.1"/>
</dbReference>
<dbReference type="SMR" id="Q5FTN2"/>
<dbReference type="STRING" id="290633.GOX0484"/>
<dbReference type="KEGG" id="gox:GOX0484"/>
<dbReference type="eggNOG" id="COG0140">
    <property type="taxonomic scope" value="Bacteria"/>
</dbReference>
<dbReference type="HOGENOM" id="CLU_123337_1_0_5"/>
<dbReference type="UniPathway" id="UPA00031">
    <property type="reaction ID" value="UER00007"/>
</dbReference>
<dbReference type="Proteomes" id="UP000006375">
    <property type="component" value="Chromosome"/>
</dbReference>
<dbReference type="GO" id="GO:0005737">
    <property type="term" value="C:cytoplasm"/>
    <property type="evidence" value="ECO:0007669"/>
    <property type="project" value="UniProtKB-SubCell"/>
</dbReference>
<dbReference type="GO" id="GO:0005524">
    <property type="term" value="F:ATP binding"/>
    <property type="evidence" value="ECO:0007669"/>
    <property type="project" value="UniProtKB-KW"/>
</dbReference>
<dbReference type="GO" id="GO:0004636">
    <property type="term" value="F:phosphoribosyl-ATP diphosphatase activity"/>
    <property type="evidence" value="ECO:0007669"/>
    <property type="project" value="UniProtKB-UniRule"/>
</dbReference>
<dbReference type="GO" id="GO:0000105">
    <property type="term" value="P:L-histidine biosynthetic process"/>
    <property type="evidence" value="ECO:0007669"/>
    <property type="project" value="UniProtKB-UniRule"/>
</dbReference>
<dbReference type="CDD" id="cd11534">
    <property type="entry name" value="NTP-PPase_HisIE_like"/>
    <property type="match status" value="1"/>
</dbReference>
<dbReference type="Gene3D" id="1.10.287.1080">
    <property type="entry name" value="MazG-like"/>
    <property type="match status" value="1"/>
</dbReference>
<dbReference type="HAMAP" id="MF_01020">
    <property type="entry name" value="HisE"/>
    <property type="match status" value="1"/>
</dbReference>
<dbReference type="InterPro" id="IPR008179">
    <property type="entry name" value="HisE"/>
</dbReference>
<dbReference type="InterPro" id="IPR021130">
    <property type="entry name" value="PRib-ATP_PPHydrolase-like"/>
</dbReference>
<dbReference type="NCBIfam" id="TIGR03188">
    <property type="entry name" value="histidine_hisI"/>
    <property type="match status" value="1"/>
</dbReference>
<dbReference type="NCBIfam" id="NF001611">
    <property type="entry name" value="PRK00400.1-3"/>
    <property type="match status" value="1"/>
</dbReference>
<dbReference type="NCBIfam" id="NF001613">
    <property type="entry name" value="PRK00400.1-5"/>
    <property type="match status" value="1"/>
</dbReference>
<dbReference type="PANTHER" id="PTHR42945">
    <property type="entry name" value="HISTIDINE BIOSYNTHESIS BIFUNCTIONAL PROTEIN"/>
    <property type="match status" value="1"/>
</dbReference>
<dbReference type="PANTHER" id="PTHR42945:SF1">
    <property type="entry name" value="HISTIDINE BIOSYNTHESIS BIFUNCTIONAL PROTEIN HIS7"/>
    <property type="match status" value="1"/>
</dbReference>
<dbReference type="Pfam" id="PF01503">
    <property type="entry name" value="PRA-PH"/>
    <property type="match status" value="1"/>
</dbReference>
<dbReference type="SUPFAM" id="SSF101386">
    <property type="entry name" value="all-alpha NTP pyrophosphatases"/>
    <property type="match status" value="1"/>
</dbReference>
<keyword id="KW-0028">Amino-acid biosynthesis</keyword>
<keyword id="KW-0067">ATP-binding</keyword>
<keyword id="KW-0963">Cytoplasm</keyword>
<keyword id="KW-0368">Histidine biosynthesis</keyword>
<keyword id="KW-0378">Hydrolase</keyword>
<keyword id="KW-0547">Nucleotide-binding</keyword>
<keyword id="KW-1185">Reference proteome</keyword>
<name>HIS2_GLUOX</name>
<accession>Q5FTN2</accession>
<gene>
    <name evidence="1" type="primary">hisE</name>
    <name type="ordered locus">GOX0484</name>
</gene>
<reference key="1">
    <citation type="journal article" date="2005" name="Nat. Biotechnol.">
        <title>Complete genome sequence of the acetic acid bacterium Gluconobacter oxydans.</title>
        <authorList>
            <person name="Prust C."/>
            <person name="Hoffmeister M."/>
            <person name="Liesegang H."/>
            <person name="Wiezer A."/>
            <person name="Fricke W.F."/>
            <person name="Ehrenreich A."/>
            <person name="Gottschalk G."/>
            <person name="Deppenmeier U."/>
        </authorList>
    </citation>
    <scope>NUCLEOTIDE SEQUENCE [LARGE SCALE GENOMIC DNA]</scope>
    <source>
        <strain>621H</strain>
    </source>
</reference>
<comment type="catalytic activity">
    <reaction evidence="1">
        <text>1-(5-phospho-beta-D-ribosyl)-ATP + H2O = 1-(5-phospho-beta-D-ribosyl)-5'-AMP + diphosphate + H(+)</text>
        <dbReference type="Rhea" id="RHEA:22828"/>
        <dbReference type="ChEBI" id="CHEBI:15377"/>
        <dbReference type="ChEBI" id="CHEBI:15378"/>
        <dbReference type="ChEBI" id="CHEBI:33019"/>
        <dbReference type="ChEBI" id="CHEBI:59457"/>
        <dbReference type="ChEBI" id="CHEBI:73183"/>
        <dbReference type="EC" id="3.6.1.31"/>
    </reaction>
</comment>
<comment type="pathway">
    <text evidence="1">Amino-acid biosynthesis; L-histidine biosynthesis; L-histidine from 5-phospho-alpha-D-ribose 1-diphosphate: step 2/9.</text>
</comment>
<comment type="subcellular location">
    <subcellularLocation>
        <location evidence="1">Cytoplasm</location>
    </subcellularLocation>
</comment>
<comment type="similarity">
    <text evidence="1">Belongs to the PRA-PH family.</text>
</comment>
<evidence type="ECO:0000255" key="1">
    <source>
        <dbReference type="HAMAP-Rule" id="MF_01020"/>
    </source>
</evidence>
<evidence type="ECO:0000256" key="2">
    <source>
        <dbReference type="SAM" id="MobiDB-lite"/>
    </source>
</evidence>
<organism>
    <name type="scientific">Gluconobacter oxydans (strain 621H)</name>
    <name type="common">Gluconobacter suboxydans</name>
    <dbReference type="NCBI Taxonomy" id="290633"/>
    <lineage>
        <taxon>Bacteria</taxon>
        <taxon>Pseudomonadati</taxon>
        <taxon>Pseudomonadota</taxon>
        <taxon>Alphaproteobacteria</taxon>
        <taxon>Acetobacterales</taxon>
        <taxon>Acetobacteraceae</taxon>
        <taxon>Gluconobacter</taxon>
    </lineage>
</organism>
<proteinExistence type="inferred from homology"/>
<sequence>MGKPATKPAPKPSKQQDDKKSDLQQELVLQRLYDTVQSRRGTDPSLSHSARLMARGRNKIAQKFGEEAVECLIEAVNGNRKELIGESADVLYHLIVMWVDAGVSPEDVWTELKRREGTSGIAEKAARPKEKLG</sequence>
<protein>
    <recommendedName>
        <fullName evidence="1">Phosphoribosyl-ATP pyrophosphatase</fullName>
        <shortName evidence="1">PRA-PH</shortName>
        <ecNumber evidence="1">3.6.1.31</ecNumber>
    </recommendedName>
</protein>